<gene>
    <name evidence="1" type="primary">argC</name>
    <name type="ordered locus">Sde_0833</name>
</gene>
<comment type="function">
    <text evidence="1">Catalyzes the NADPH-dependent reduction of N-acetyl-5-glutamyl phosphate to yield N-acetyl-L-glutamate 5-semialdehyde.</text>
</comment>
<comment type="catalytic activity">
    <reaction evidence="1">
        <text>N-acetyl-L-glutamate 5-semialdehyde + phosphate + NADP(+) = N-acetyl-L-glutamyl 5-phosphate + NADPH + H(+)</text>
        <dbReference type="Rhea" id="RHEA:21588"/>
        <dbReference type="ChEBI" id="CHEBI:15378"/>
        <dbReference type="ChEBI" id="CHEBI:29123"/>
        <dbReference type="ChEBI" id="CHEBI:43474"/>
        <dbReference type="ChEBI" id="CHEBI:57783"/>
        <dbReference type="ChEBI" id="CHEBI:57936"/>
        <dbReference type="ChEBI" id="CHEBI:58349"/>
        <dbReference type="EC" id="1.2.1.38"/>
    </reaction>
</comment>
<comment type="pathway">
    <text evidence="1">Amino-acid biosynthesis; L-arginine biosynthesis; N(2)-acetyl-L-ornithine from L-glutamate: step 3/4.</text>
</comment>
<comment type="subcellular location">
    <subcellularLocation>
        <location evidence="1">Cytoplasm</location>
    </subcellularLocation>
</comment>
<comment type="similarity">
    <text evidence="1">Belongs to the NAGSA dehydrogenase family. Type 1 subfamily.</text>
</comment>
<evidence type="ECO:0000255" key="1">
    <source>
        <dbReference type="HAMAP-Rule" id="MF_00150"/>
    </source>
</evidence>
<sequence>MIKVGIVGGTGYTGVELLRILASHPQAEVTVITSRAEAGRQVSELFPNLRGHYDLAFSEPSKEVLLECDVIFFATPHGVAQAMMAELIEGGARVIDLSADFRIRDIATWEKWYGQKHGCPDLVASAVYGLPEVNREKIKSAQLIACPGCYPTSIQLGFLPLLEKGLIDVSSLIANSASGTTGAGKQASVPNLFSEASDSFKAYGAAGHRHLPEIEQGLVDIGGEHANGLSLTFVPHLLPTIRGIHSTLYAKLKGDAGDLQALYEQRYANEPFVDVLPKGDFPQTRTVKSTNMCRISVIEPQERGTVVIMSVIDNLTKGASGQGVQNMNIMFGLDENMGMSSPAILP</sequence>
<organism>
    <name type="scientific">Saccharophagus degradans (strain 2-40 / ATCC 43961 / DSM 17024)</name>
    <dbReference type="NCBI Taxonomy" id="203122"/>
    <lineage>
        <taxon>Bacteria</taxon>
        <taxon>Pseudomonadati</taxon>
        <taxon>Pseudomonadota</taxon>
        <taxon>Gammaproteobacteria</taxon>
        <taxon>Cellvibrionales</taxon>
        <taxon>Cellvibrionaceae</taxon>
        <taxon>Saccharophagus</taxon>
    </lineage>
</organism>
<reference key="1">
    <citation type="journal article" date="2008" name="PLoS Genet.">
        <title>Complete genome sequence of the complex carbohydrate-degrading marine bacterium, Saccharophagus degradans strain 2-40 T.</title>
        <authorList>
            <person name="Weiner R.M."/>
            <person name="Taylor L.E. II"/>
            <person name="Henrissat B."/>
            <person name="Hauser L."/>
            <person name="Land M."/>
            <person name="Coutinho P.M."/>
            <person name="Rancurel C."/>
            <person name="Saunders E.H."/>
            <person name="Longmire A.G."/>
            <person name="Zhang H."/>
            <person name="Bayer E.A."/>
            <person name="Gilbert H.J."/>
            <person name="Larimer F."/>
            <person name="Zhulin I.B."/>
            <person name="Ekborg N.A."/>
            <person name="Lamed R."/>
            <person name="Richardson P.M."/>
            <person name="Borovok I."/>
            <person name="Hutcheson S."/>
        </authorList>
    </citation>
    <scope>NUCLEOTIDE SEQUENCE [LARGE SCALE GENOMIC DNA]</scope>
    <source>
        <strain>2-40 / ATCC 43961 / DSM 17024</strain>
    </source>
</reference>
<keyword id="KW-0028">Amino-acid biosynthesis</keyword>
<keyword id="KW-0055">Arginine biosynthesis</keyword>
<keyword id="KW-0963">Cytoplasm</keyword>
<keyword id="KW-0521">NADP</keyword>
<keyword id="KW-0560">Oxidoreductase</keyword>
<keyword id="KW-1185">Reference proteome</keyword>
<feature type="chain" id="PRO_1000011054" description="N-acetyl-gamma-glutamyl-phosphate reductase">
    <location>
        <begin position="1"/>
        <end position="346"/>
    </location>
</feature>
<feature type="active site" evidence="1">
    <location>
        <position position="149"/>
    </location>
</feature>
<accession>Q21MI4</accession>
<proteinExistence type="inferred from homology"/>
<dbReference type="EC" id="1.2.1.38" evidence="1"/>
<dbReference type="EMBL" id="CP000282">
    <property type="protein sequence ID" value="ABD80095.1"/>
    <property type="molecule type" value="Genomic_DNA"/>
</dbReference>
<dbReference type="RefSeq" id="WP_011467316.1">
    <property type="nucleotide sequence ID" value="NC_007912.1"/>
</dbReference>
<dbReference type="SMR" id="Q21MI4"/>
<dbReference type="STRING" id="203122.Sde_0833"/>
<dbReference type="GeneID" id="98612515"/>
<dbReference type="KEGG" id="sde:Sde_0833"/>
<dbReference type="eggNOG" id="COG0002">
    <property type="taxonomic scope" value="Bacteria"/>
</dbReference>
<dbReference type="HOGENOM" id="CLU_006384_0_1_6"/>
<dbReference type="OrthoDB" id="9801289at2"/>
<dbReference type="UniPathway" id="UPA00068">
    <property type="reaction ID" value="UER00108"/>
</dbReference>
<dbReference type="Proteomes" id="UP000001947">
    <property type="component" value="Chromosome"/>
</dbReference>
<dbReference type="GO" id="GO:0005737">
    <property type="term" value="C:cytoplasm"/>
    <property type="evidence" value="ECO:0007669"/>
    <property type="project" value="UniProtKB-SubCell"/>
</dbReference>
<dbReference type="GO" id="GO:0003942">
    <property type="term" value="F:N-acetyl-gamma-glutamyl-phosphate reductase activity"/>
    <property type="evidence" value="ECO:0007669"/>
    <property type="project" value="UniProtKB-UniRule"/>
</dbReference>
<dbReference type="GO" id="GO:0051287">
    <property type="term" value="F:NAD binding"/>
    <property type="evidence" value="ECO:0007669"/>
    <property type="project" value="InterPro"/>
</dbReference>
<dbReference type="GO" id="GO:0070401">
    <property type="term" value="F:NADP+ binding"/>
    <property type="evidence" value="ECO:0007669"/>
    <property type="project" value="InterPro"/>
</dbReference>
<dbReference type="GO" id="GO:0006526">
    <property type="term" value="P:L-arginine biosynthetic process"/>
    <property type="evidence" value="ECO:0007669"/>
    <property type="project" value="UniProtKB-UniRule"/>
</dbReference>
<dbReference type="CDD" id="cd23934">
    <property type="entry name" value="AGPR_1_C"/>
    <property type="match status" value="1"/>
</dbReference>
<dbReference type="CDD" id="cd17895">
    <property type="entry name" value="AGPR_1_N"/>
    <property type="match status" value="1"/>
</dbReference>
<dbReference type="FunFam" id="3.30.360.10:FF:000014">
    <property type="entry name" value="N-acetyl-gamma-glutamyl-phosphate reductase"/>
    <property type="match status" value="1"/>
</dbReference>
<dbReference type="Gene3D" id="3.30.360.10">
    <property type="entry name" value="Dihydrodipicolinate Reductase, domain 2"/>
    <property type="match status" value="1"/>
</dbReference>
<dbReference type="Gene3D" id="3.40.50.720">
    <property type="entry name" value="NAD(P)-binding Rossmann-like Domain"/>
    <property type="match status" value="1"/>
</dbReference>
<dbReference type="HAMAP" id="MF_00150">
    <property type="entry name" value="ArgC_type1"/>
    <property type="match status" value="1"/>
</dbReference>
<dbReference type="InterPro" id="IPR023013">
    <property type="entry name" value="AGPR_AS"/>
</dbReference>
<dbReference type="InterPro" id="IPR000706">
    <property type="entry name" value="AGPR_type-1"/>
</dbReference>
<dbReference type="InterPro" id="IPR036291">
    <property type="entry name" value="NAD(P)-bd_dom_sf"/>
</dbReference>
<dbReference type="InterPro" id="IPR050085">
    <property type="entry name" value="NAGSA_dehydrogenase"/>
</dbReference>
<dbReference type="InterPro" id="IPR000534">
    <property type="entry name" value="Semialdehyde_DH_NAD-bd"/>
</dbReference>
<dbReference type="NCBIfam" id="TIGR01850">
    <property type="entry name" value="argC"/>
    <property type="match status" value="1"/>
</dbReference>
<dbReference type="PANTHER" id="PTHR32338:SF10">
    <property type="entry name" value="N-ACETYL-GAMMA-GLUTAMYL-PHOSPHATE REDUCTASE, CHLOROPLASTIC-RELATED"/>
    <property type="match status" value="1"/>
</dbReference>
<dbReference type="PANTHER" id="PTHR32338">
    <property type="entry name" value="N-ACETYL-GAMMA-GLUTAMYL-PHOSPHATE REDUCTASE, CHLOROPLASTIC-RELATED-RELATED"/>
    <property type="match status" value="1"/>
</dbReference>
<dbReference type="Pfam" id="PF01118">
    <property type="entry name" value="Semialdhyde_dh"/>
    <property type="match status" value="1"/>
</dbReference>
<dbReference type="Pfam" id="PF22698">
    <property type="entry name" value="Semialdhyde_dhC_1"/>
    <property type="match status" value="1"/>
</dbReference>
<dbReference type="SMART" id="SM00859">
    <property type="entry name" value="Semialdhyde_dh"/>
    <property type="match status" value="1"/>
</dbReference>
<dbReference type="SUPFAM" id="SSF55347">
    <property type="entry name" value="Glyceraldehyde-3-phosphate dehydrogenase-like, C-terminal domain"/>
    <property type="match status" value="1"/>
</dbReference>
<dbReference type="SUPFAM" id="SSF51735">
    <property type="entry name" value="NAD(P)-binding Rossmann-fold domains"/>
    <property type="match status" value="1"/>
</dbReference>
<dbReference type="PROSITE" id="PS01224">
    <property type="entry name" value="ARGC"/>
    <property type="match status" value="1"/>
</dbReference>
<protein>
    <recommendedName>
        <fullName evidence="1">N-acetyl-gamma-glutamyl-phosphate reductase</fullName>
        <shortName evidence="1">AGPR</shortName>
        <ecNumber evidence="1">1.2.1.38</ecNumber>
    </recommendedName>
    <alternativeName>
        <fullName evidence="1">N-acetyl-glutamate semialdehyde dehydrogenase</fullName>
        <shortName evidence="1">NAGSA dehydrogenase</shortName>
    </alternativeName>
</protein>
<name>ARGC_SACD2</name>